<organism>
    <name type="scientific">Salmonella heidelberg (strain SL476)</name>
    <dbReference type="NCBI Taxonomy" id="454169"/>
    <lineage>
        <taxon>Bacteria</taxon>
        <taxon>Pseudomonadati</taxon>
        <taxon>Pseudomonadota</taxon>
        <taxon>Gammaproteobacteria</taxon>
        <taxon>Enterobacterales</taxon>
        <taxon>Enterobacteriaceae</taxon>
        <taxon>Salmonella</taxon>
    </lineage>
</organism>
<proteinExistence type="inferred from homology"/>
<feature type="chain" id="PRO_1000122239" description="Integration host factor subunit beta">
    <location>
        <begin position="1"/>
        <end position="94"/>
    </location>
</feature>
<protein>
    <recommendedName>
        <fullName evidence="1">Integration host factor subunit beta</fullName>
        <shortName evidence="1">IHF-beta</shortName>
    </recommendedName>
</protein>
<accession>B4TD42</accession>
<evidence type="ECO:0000255" key="1">
    <source>
        <dbReference type="HAMAP-Rule" id="MF_00381"/>
    </source>
</evidence>
<name>IHFB_SALHS</name>
<sequence length="94" mass="10621">MTKSELIERLATQQSHIPAKAVEDAVKEMLEHMASTLAQGERIEIRGFGSFSLHYRAPRTGRNPKTGDKVELEGKYVPHFKPGKELRDRANIYG</sequence>
<keyword id="KW-0233">DNA recombination</keyword>
<keyword id="KW-0238">DNA-binding</keyword>
<keyword id="KW-0804">Transcription</keyword>
<keyword id="KW-0805">Transcription regulation</keyword>
<keyword id="KW-0810">Translation regulation</keyword>
<comment type="function">
    <text evidence="1">This protein is one of the two subunits of integration host factor, a specific DNA-binding protein that functions in genetic recombination as well as in transcriptional and translational control.</text>
</comment>
<comment type="subunit">
    <text evidence="1">Heterodimer of an alpha and a beta chain.</text>
</comment>
<comment type="similarity">
    <text evidence="1">Belongs to the bacterial histone-like protein family.</text>
</comment>
<reference key="1">
    <citation type="journal article" date="2011" name="J. Bacteriol.">
        <title>Comparative genomics of 28 Salmonella enterica isolates: evidence for CRISPR-mediated adaptive sublineage evolution.</title>
        <authorList>
            <person name="Fricke W.F."/>
            <person name="Mammel M.K."/>
            <person name="McDermott P.F."/>
            <person name="Tartera C."/>
            <person name="White D.G."/>
            <person name="Leclerc J.E."/>
            <person name="Ravel J."/>
            <person name="Cebula T.A."/>
        </authorList>
    </citation>
    <scope>NUCLEOTIDE SEQUENCE [LARGE SCALE GENOMIC DNA]</scope>
    <source>
        <strain>SL476</strain>
    </source>
</reference>
<dbReference type="EMBL" id="CP001120">
    <property type="protein sequence ID" value="ACF68667.1"/>
    <property type="molecule type" value="Genomic_DNA"/>
</dbReference>
<dbReference type="RefSeq" id="WP_000167332.1">
    <property type="nucleotide sequence ID" value="NC_011083.1"/>
</dbReference>
<dbReference type="SMR" id="B4TD42"/>
<dbReference type="GeneID" id="84237116"/>
<dbReference type="KEGG" id="seh:SeHA_C1080"/>
<dbReference type="HOGENOM" id="CLU_105066_2_0_6"/>
<dbReference type="Proteomes" id="UP000001866">
    <property type="component" value="Chromosome"/>
</dbReference>
<dbReference type="GO" id="GO:0005694">
    <property type="term" value="C:chromosome"/>
    <property type="evidence" value="ECO:0007669"/>
    <property type="project" value="InterPro"/>
</dbReference>
<dbReference type="GO" id="GO:0005829">
    <property type="term" value="C:cytosol"/>
    <property type="evidence" value="ECO:0007669"/>
    <property type="project" value="TreeGrafter"/>
</dbReference>
<dbReference type="GO" id="GO:0003677">
    <property type="term" value="F:DNA binding"/>
    <property type="evidence" value="ECO:0007669"/>
    <property type="project" value="UniProtKB-UniRule"/>
</dbReference>
<dbReference type="GO" id="GO:0030527">
    <property type="term" value="F:structural constituent of chromatin"/>
    <property type="evidence" value="ECO:0007669"/>
    <property type="project" value="InterPro"/>
</dbReference>
<dbReference type="GO" id="GO:0006310">
    <property type="term" value="P:DNA recombination"/>
    <property type="evidence" value="ECO:0007669"/>
    <property type="project" value="UniProtKB-UniRule"/>
</dbReference>
<dbReference type="GO" id="GO:0006355">
    <property type="term" value="P:regulation of DNA-templated transcription"/>
    <property type="evidence" value="ECO:0007669"/>
    <property type="project" value="UniProtKB-UniRule"/>
</dbReference>
<dbReference type="GO" id="GO:0006417">
    <property type="term" value="P:regulation of translation"/>
    <property type="evidence" value="ECO:0007669"/>
    <property type="project" value="UniProtKB-UniRule"/>
</dbReference>
<dbReference type="CDD" id="cd13836">
    <property type="entry name" value="IHF_B"/>
    <property type="match status" value="1"/>
</dbReference>
<dbReference type="FunFam" id="4.10.520.10:FF:000003">
    <property type="entry name" value="Integration host factor subunit beta"/>
    <property type="match status" value="1"/>
</dbReference>
<dbReference type="Gene3D" id="4.10.520.10">
    <property type="entry name" value="IHF-like DNA-binding proteins"/>
    <property type="match status" value="1"/>
</dbReference>
<dbReference type="HAMAP" id="MF_00381">
    <property type="entry name" value="IHF_beta"/>
    <property type="match status" value="1"/>
</dbReference>
<dbReference type="InterPro" id="IPR000119">
    <property type="entry name" value="Hist_DNA-bd"/>
</dbReference>
<dbReference type="InterPro" id="IPR020816">
    <property type="entry name" value="Histone-like_DNA-bd_CS"/>
</dbReference>
<dbReference type="InterPro" id="IPR010992">
    <property type="entry name" value="IHF-like_DNA-bd_dom_sf"/>
</dbReference>
<dbReference type="InterPro" id="IPR005685">
    <property type="entry name" value="IHF_beta"/>
</dbReference>
<dbReference type="NCBIfam" id="TIGR00988">
    <property type="entry name" value="hip"/>
    <property type="match status" value="1"/>
</dbReference>
<dbReference type="NCBIfam" id="NF001222">
    <property type="entry name" value="PRK00199.1"/>
    <property type="match status" value="1"/>
</dbReference>
<dbReference type="PANTHER" id="PTHR33175">
    <property type="entry name" value="DNA-BINDING PROTEIN HU"/>
    <property type="match status" value="1"/>
</dbReference>
<dbReference type="PANTHER" id="PTHR33175:SF5">
    <property type="entry name" value="INTEGRATION HOST FACTOR SUBUNIT BETA"/>
    <property type="match status" value="1"/>
</dbReference>
<dbReference type="Pfam" id="PF00216">
    <property type="entry name" value="Bac_DNA_binding"/>
    <property type="match status" value="1"/>
</dbReference>
<dbReference type="PRINTS" id="PR01727">
    <property type="entry name" value="DNABINDINGHU"/>
</dbReference>
<dbReference type="SMART" id="SM00411">
    <property type="entry name" value="BHL"/>
    <property type="match status" value="1"/>
</dbReference>
<dbReference type="SUPFAM" id="SSF47729">
    <property type="entry name" value="IHF-like DNA-binding proteins"/>
    <property type="match status" value="1"/>
</dbReference>
<dbReference type="PROSITE" id="PS00045">
    <property type="entry name" value="HISTONE_LIKE"/>
    <property type="match status" value="1"/>
</dbReference>
<gene>
    <name evidence="1" type="primary">ihfB</name>
    <name evidence="1" type="synonym">himD</name>
    <name type="ordered locus">SeHA_C1080</name>
</gene>